<feature type="chain" id="PRO_1000008117" description="DNA mismatch repair protein MutS">
    <location>
        <begin position="1"/>
        <end position="851"/>
    </location>
</feature>
<feature type="binding site" evidence="1">
    <location>
        <begin position="614"/>
        <end position="621"/>
    </location>
    <ligand>
        <name>ATP</name>
        <dbReference type="ChEBI" id="CHEBI:30616"/>
    </ligand>
</feature>
<protein>
    <recommendedName>
        <fullName evidence="1">DNA mismatch repair protein MutS</fullName>
    </recommendedName>
</protein>
<evidence type="ECO:0000255" key="1">
    <source>
        <dbReference type="HAMAP-Rule" id="MF_00096"/>
    </source>
</evidence>
<keyword id="KW-0067">ATP-binding</keyword>
<keyword id="KW-0227">DNA damage</keyword>
<keyword id="KW-0234">DNA repair</keyword>
<keyword id="KW-0238">DNA-binding</keyword>
<keyword id="KW-0547">Nucleotide-binding</keyword>
<gene>
    <name evidence="1" type="primary">mutS</name>
    <name type="ordered locus">YE0776</name>
</gene>
<name>MUTS_YERE8</name>
<organism>
    <name type="scientific">Yersinia enterocolitica serotype O:8 / biotype 1B (strain NCTC 13174 / 8081)</name>
    <dbReference type="NCBI Taxonomy" id="393305"/>
    <lineage>
        <taxon>Bacteria</taxon>
        <taxon>Pseudomonadati</taxon>
        <taxon>Pseudomonadota</taxon>
        <taxon>Gammaproteobacteria</taxon>
        <taxon>Enterobacterales</taxon>
        <taxon>Yersiniaceae</taxon>
        <taxon>Yersinia</taxon>
    </lineage>
</organism>
<comment type="function">
    <text evidence="1">This protein is involved in the repair of mismatches in DNA. It is possible that it carries out the mismatch recognition step. This protein has a weak ATPase activity.</text>
</comment>
<comment type="similarity">
    <text evidence="1">Belongs to the DNA mismatch repair MutS family.</text>
</comment>
<proteinExistence type="inferred from homology"/>
<reference key="1">
    <citation type="journal article" date="2006" name="PLoS Genet.">
        <title>The complete genome sequence and comparative genome analysis of the high pathogenicity Yersinia enterocolitica strain 8081.</title>
        <authorList>
            <person name="Thomson N.R."/>
            <person name="Howard S."/>
            <person name="Wren B.W."/>
            <person name="Holden M.T.G."/>
            <person name="Crossman L."/>
            <person name="Challis G.L."/>
            <person name="Churcher C."/>
            <person name="Mungall K."/>
            <person name="Brooks K."/>
            <person name="Chillingworth T."/>
            <person name="Feltwell T."/>
            <person name="Abdellah Z."/>
            <person name="Hauser H."/>
            <person name="Jagels K."/>
            <person name="Maddison M."/>
            <person name="Moule S."/>
            <person name="Sanders M."/>
            <person name="Whitehead S."/>
            <person name="Quail M.A."/>
            <person name="Dougan G."/>
            <person name="Parkhill J."/>
            <person name="Prentice M.B."/>
        </authorList>
    </citation>
    <scope>NUCLEOTIDE SEQUENCE [LARGE SCALE GENOMIC DNA]</scope>
    <source>
        <strain>NCTC 13174 / 8081</strain>
    </source>
</reference>
<dbReference type="EMBL" id="AM286415">
    <property type="protein sequence ID" value="CAL10878.1"/>
    <property type="molecule type" value="Genomic_DNA"/>
</dbReference>
<dbReference type="RefSeq" id="WP_011815614.1">
    <property type="nucleotide sequence ID" value="NC_008800.1"/>
</dbReference>
<dbReference type="RefSeq" id="YP_001005117.1">
    <property type="nucleotide sequence ID" value="NC_008800.1"/>
</dbReference>
<dbReference type="SMR" id="A1JJU1"/>
<dbReference type="KEGG" id="yen:YE0776"/>
<dbReference type="PATRIC" id="fig|393305.7.peg.869"/>
<dbReference type="eggNOG" id="COG0249">
    <property type="taxonomic scope" value="Bacteria"/>
</dbReference>
<dbReference type="HOGENOM" id="CLU_002472_4_0_6"/>
<dbReference type="OrthoDB" id="9802448at2"/>
<dbReference type="Proteomes" id="UP000000642">
    <property type="component" value="Chromosome"/>
</dbReference>
<dbReference type="GO" id="GO:0005829">
    <property type="term" value="C:cytosol"/>
    <property type="evidence" value="ECO:0007669"/>
    <property type="project" value="TreeGrafter"/>
</dbReference>
<dbReference type="GO" id="GO:0005524">
    <property type="term" value="F:ATP binding"/>
    <property type="evidence" value="ECO:0007669"/>
    <property type="project" value="UniProtKB-UniRule"/>
</dbReference>
<dbReference type="GO" id="GO:0140664">
    <property type="term" value="F:ATP-dependent DNA damage sensor activity"/>
    <property type="evidence" value="ECO:0007669"/>
    <property type="project" value="InterPro"/>
</dbReference>
<dbReference type="GO" id="GO:0003684">
    <property type="term" value="F:damaged DNA binding"/>
    <property type="evidence" value="ECO:0007669"/>
    <property type="project" value="UniProtKB-UniRule"/>
</dbReference>
<dbReference type="GO" id="GO:0030983">
    <property type="term" value="F:mismatched DNA binding"/>
    <property type="evidence" value="ECO:0007669"/>
    <property type="project" value="InterPro"/>
</dbReference>
<dbReference type="GO" id="GO:0006298">
    <property type="term" value="P:mismatch repair"/>
    <property type="evidence" value="ECO:0007669"/>
    <property type="project" value="UniProtKB-UniRule"/>
</dbReference>
<dbReference type="CDD" id="cd03284">
    <property type="entry name" value="ABC_MutS1"/>
    <property type="match status" value="1"/>
</dbReference>
<dbReference type="FunFam" id="1.10.1420.10:FF:000002">
    <property type="entry name" value="DNA mismatch repair protein MutS"/>
    <property type="match status" value="1"/>
</dbReference>
<dbReference type="FunFam" id="3.30.420.110:FF:000001">
    <property type="entry name" value="DNA mismatch repair protein MutS"/>
    <property type="match status" value="1"/>
</dbReference>
<dbReference type="FunFam" id="3.40.1170.10:FF:000001">
    <property type="entry name" value="DNA mismatch repair protein MutS"/>
    <property type="match status" value="1"/>
</dbReference>
<dbReference type="FunFam" id="3.40.50.300:FF:000283">
    <property type="entry name" value="DNA mismatch repair protein MutS"/>
    <property type="match status" value="1"/>
</dbReference>
<dbReference type="Gene3D" id="1.10.1420.10">
    <property type="match status" value="2"/>
</dbReference>
<dbReference type="Gene3D" id="6.10.140.430">
    <property type="match status" value="1"/>
</dbReference>
<dbReference type="Gene3D" id="3.40.1170.10">
    <property type="entry name" value="DNA repair protein MutS, domain I"/>
    <property type="match status" value="1"/>
</dbReference>
<dbReference type="Gene3D" id="3.30.420.110">
    <property type="entry name" value="MutS, connector domain"/>
    <property type="match status" value="1"/>
</dbReference>
<dbReference type="Gene3D" id="3.40.50.300">
    <property type="entry name" value="P-loop containing nucleotide triphosphate hydrolases"/>
    <property type="match status" value="1"/>
</dbReference>
<dbReference type="HAMAP" id="MF_00096">
    <property type="entry name" value="MutS"/>
    <property type="match status" value="1"/>
</dbReference>
<dbReference type="InterPro" id="IPR005748">
    <property type="entry name" value="DNA_mismatch_repair_MutS"/>
</dbReference>
<dbReference type="InterPro" id="IPR007695">
    <property type="entry name" value="DNA_mismatch_repair_MutS-lik_N"/>
</dbReference>
<dbReference type="InterPro" id="IPR017261">
    <property type="entry name" value="DNA_mismatch_repair_MutS/MSH"/>
</dbReference>
<dbReference type="InterPro" id="IPR000432">
    <property type="entry name" value="DNA_mismatch_repair_MutS_C"/>
</dbReference>
<dbReference type="InterPro" id="IPR007861">
    <property type="entry name" value="DNA_mismatch_repair_MutS_clamp"/>
</dbReference>
<dbReference type="InterPro" id="IPR007696">
    <property type="entry name" value="DNA_mismatch_repair_MutS_core"/>
</dbReference>
<dbReference type="InterPro" id="IPR016151">
    <property type="entry name" value="DNA_mismatch_repair_MutS_N"/>
</dbReference>
<dbReference type="InterPro" id="IPR036187">
    <property type="entry name" value="DNA_mismatch_repair_MutS_sf"/>
</dbReference>
<dbReference type="InterPro" id="IPR007860">
    <property type="entry name" value="DNA_mmatch_repair_MutS_con_dom"/>
</dbReference>
<dbReference type="InterPro" id="IPR045076">
    <property type="entry name" value="MutS"/>
</dbReference>
<dbReference type="InterPro" id="IPR036678">
    <property type="entry name" value="MutS_con_dom_sf"/>
</dbReference>
<dbReference type="InterPro" id="IPR027417">
    <property type="entry name" value="P-loop_NTPase"/>
</dbReference>
<dbReference type="NCBIfam" id="TIGR01070">
    <property type="entry name" value="mutS1"/>
    <property type="match status" value="1"/>
</dbReference>
<dbReference type="NCBIfam" id="NF003810">
    <property type="entry name" value="PRK05399.1"/>
    <property type="match status" value="1"/>
</dbReference>
<dbReference type="PANTHER" id="PTHR11361:SF34">
    <property type="entry name" value="DNA MISMATCH REPAIR PROTEIN MSH1, MITOCHONDRIAL"/>
    <property type="match status" value="1"/>
</dbReference>
<dbReference type="PANTHER" id="PTHR11361">
    <property type="entry name" value="DNA MISMATCH REPAIR PROTEIN MUTS FAMILY MEMBER"/>
    <property type="match status" value="1"/>
</dbReference>
<dbReference type="Pfam" id="PF01624">
    <property type="entry name" value="MutS_I"/>
    <property type="match status" value="1"/>
</dbReference>
<dbReference type="Pfam" id="PF05188">
    <property type="entry name" value="MutS_II"/>
    <property type="match status" value="1"/>
</dbReference>
<dbReference type="Pfam" id="PF05192">
    <property type="entry name" value="MutS_III"/>
    <property type="match status" value="1"/>
</dbReference>
<dbReference type="Pfam" id="PF05190">
    <property type="entry name" value="MutS_IV"/>
    <property type="match status" value="1"/>
</dbReference>
<dbReference type="Pfam" id="PF00488">
    <property type="entry name" value="MutS_V"/>
    <property type="match status" value="1"/>
</dbReference>
<dbReference type="PIRSF" id="PIRSF037677">
    <property type="entry name" value="DNA_mis_repair_Msh6"/>
    <property type="match status" value="1"/>
</dbReference>
<dbReference type="SMART" id="SM00534">
    <property type="entry name" value="MUTSac"/>
    <property type="match status" value="1"/>
</dbReference>
<dbReference type="SMART" id="SM00533">
    <property type="entry name" value="MUTSd"/>
    <property type="match status" value="1"/>
</dbReference>
<dbReference type="SUPFAM" id="SSF55271">
    <property type="entry name" value="DNA repair protein MutS, domain I"/>
    <property type="match status" value="1"/>
</dbReference>
<dbReference type="SUPFAM" id="SSF53150">
    <property type="entry name" value="DNA repair protein MutS, domain II"/>
    <property type="match status" value="1"/>
</dbReference>
<dbReference type="SUPFAM" id="SSF48334">
    <property type="entry name" value="DNA repair protein MutS, domain III"/>
    <property type="match status" value="1"/>
</dbReference>
<dbReference type="SUPFAM" id="SSF52540">
    <property type="entry name" value="P-loop containing nucleoside triphosphate hydrolases"/>
    <property type="match status" value="1"/>
</dbReference>
<dbReference type="PROSITE" id="PS00486">
    <property type="entry name" value="DNA_MISMATCH_REPAIR_2"/>
    <property type="match status" value="1"/>
</dbReference>
<sequence>MNNTDKLDSHTPMMQQYLRLKAQHPEILLFYRMGDFYELFYSDAKRASQLLDISLTKRGASAGEPIPMAGVPYHSIENYLAKLVQLGESAAICEQIGDPATSKGPVERKVVRIVTPGTVSDEALLQERQDNLLAAIWQDARGFGYATLDISSGRFRVAEPADLETMAAELQRTNPAELLYPENFEQMSLIEHRHGLRRRPLWEFELETAKQQLNLQFGTRDLIGFGVEQAHQALRAAGCLLQYVKDTQRTSLPHIRGLTMERQQDGIVMDAATRRNLELTQNLSGGTENTLAAILDCTVTAMGSRMLKRWLHMPIRDTKVLTDRQQAIGGLQDITAELQTPLRQVGDLERILARLALRTARPRDLARMRHAFQQLPEIHRLLQPVNVPHIQNLLSQVGQFDELQDLLERAIVETPPVLVRDGGVIASGYNAELDEWRALADGATDYLDRLEIREREKLGLDTLKVGFNGVHGYYIQVSRGQSHLVPIHYVRRQTLKNAERYIIPELKEYEDKVLTSKGKALAIEKGLYEEIFDLLLPHLPELQTSANALAELDVLANLAERAETLNYNCPVLSDKPGIKITGGRHPVVEQVLSEPFISNPLTLSPQRRMLIITGPNMGGKSTYMRQTALIVLLAHMGSYVPADQATIGPVDRIFTRVGAADDLASGRSTFMVEMTETANILHNATEQSLVLMDEIGRGTSTYDGLSLAWACAENLASRIKAMTLFATHYFELTTLPEKMEGVVNVHLDALEHGETIAFMHSVQDGAASKSYGLAVAALAGVPRDVIKRARQKLKELESLSNNAAASKIDGSQLTLLNEEVSPAVEALEALDPDSLSPRQALEWIYRLKNMV</sequence>
<accession>A1JJU1</accession>